<sequence>MDPNCSCAAGVSCTCAGSCKCKECKCTSCKKSCCSCCPVGCSKCAQGCVCKGASEKCSCCD</sequence>
<name>MT1F_HUMAN</name>
<accession>P04733</accession>
<accession>Q9UI97</accession>
<gene>
    <name type="primary">MT1F</name>
    <name type="ORF">PRO0376</name>
</gene>
<evidence type="ECO:0000250" key="1">
    <source>
        <dbReference type="UniProtKB" id="P02795"/>
    </source>
</evidence>
<evidence type="ECO:0000269" key="2">
    <source ref="5"/>
</evidence>
<evidence type="ECO:0000305" key="3"/>
<organism>
    <name type="scientific">Homo sapiens</name>
    <name type="common">Human</name>
    <dbReference type="NCBI Taxonomy" id="9606"/>
    <lineage>
        <taxon>Eukaryota</taxon>
        <taxon>Metazoa</taxon>
        <taxon>Chordata</taxon>
        <taxon>Craniata</taxon>
        <taxon>Vertebrata</taxon>
        <taxon>Euteleostomi</taxon>
        <taxon>Mammalia</taxon>
        <taxon>Eutheria</taxon>
        <taxon>Euarchontoglires</taxon>
        <taxon>Primates</taxon>
        <taxon>Haplorrhini</taxon>
        <taxon>Catarrhini</taxon>
        <taxon>Hominidae</taxon>
        <taxon>Homo</taxon>
    </lineage>
</organism>
<comment type="function">
    <text>Metallothioneins have a high content of cysteine residues that bind various heavy metals; these proteins are transcriptionally regulated by both heavy metals and glucocorticoids.</text>
</comment>
<comment type="subunit">
    <text>Monomer.</text>
</comment>
<comment type="interaction">
    <interactant intactId="EBI-10209483">
        <id>P04733</id>
    </interactant>
    <interactant intactId="EBI-356811">
        <id>P46087</id>
        <label>NOP2</label>
    </interactant>
    <organismsDiffer>false</organismsDiffer>
    <experiments>3</experiments>
</comment>
<comment type="domain">
    <text>Class I metallothioneins contain 2 metal-binding domains: four divalent ions are chelated within cluster A of the alpha domain and are coordinated via cysteinyl thiolate bridges to 11 cysteine ligands. Cluster B, the corresponding region within the beta domain, can ligate three divalent ions to 9 cysteines.</text>
</comment>
<comment type="similarity">
    <text evidence="3">Belongs to the metallothionein superfamily. Type 1 family.</text>
</comment>
<comment type="sequence caution" evidence="3">
    <conflict type="erroneous initiation">
        <sequence resource="EMBL-CDS" id="AAF23355"/>
    </conflict>
</comment>
<proteinExistence type="evidence at protein level"/>
<protein>
    <recommendedName>
        <fullName>Metallothionein-1F</fullName>
        <shortName>MT-1F</shortName>
    </recommendedName>
    <alternativeName>
        <fullName>Metallothionein-IF</fullName>
        <shortName>MT-IF</shortName>
    </alternativeName>
</protein>
<reference key="1">
    <citation type="journal article" date="1985" name="J. Biol. Chem.">
        <title>Structure and expression of two human metallothionein-I isoform genes and a related pseudogene.</title>
        <authorList>
            <person name="Schmidt C.J."/>
            <person name="Jubier M.-F."/>
            <person name="Hamer D.H."/>
        </authorList>
    </citation>
    <scope>NUCLEOTIDE SEQUENCE [GENOMIC DNA]</scope>
</reference>
<reference key="2">
    <citation type="journal article" date="1986" name="Mol. Cell. Biol.">
        <title>Structure, organization, and regulation of human metallothionein IF gene: differential and cell-type-specific expression in response to heavy metals and glucocorticoids.</title>
        <authorList>
            <person name="Varshney U."/>
            <person name="Jahroudi N."/>
            <person name="Foster R."/>
            <person name="Gedamu L."/>
        </authorList>
    </citation>
    <scope>NUCLEOTIDE SEQUENCE [GENOMIC DNA]</scope>
</reference>
<reference key="3">
    <citation type="journal article" date="1987" name="Experientia Suppl.">
        <title>Structure and expression of the human metallothionein genes.</title>
        <authorList>
            <person name="Gedamu L."/>
            <person name="Varshney U."/>
            <person name="Jahroudi N."/>
            <person name="Foster R."/>
            <person name="Shworak N.W."/>
        </authorList>
    </citation>
    <scope>NUCLEOTIDE SEQUENCE [GENOMIC DNA]</scope>
</reference>
<reference key="4">
    <citation type="submission" date="1998-07" db="EMBL/GenBank/DDBJ databases">
        <title>Functional prediction of the coding sequences of 50 new genes deduced by analysis of cDNA clones from human fetal liver.</title>
        <authorList>
            <person name="Yu Y."/>
            <person name="Zhang C."/>
            <person name="Luo L."/>
            <person name="Ouyang S."/>
            <person name="Zhang S."/>
            <person name="Li W."/>
            <person name="Wu J."/>
            <person name="Zhou S."/>
            <person name="Liu M."/>
            <person name="He F."/>
        </authorList>
    </citation>
    <scope>NUCLEOTIDE SEQUENCE [LARGE SCALE MRNA]</scope>
    <source>
        <tissue>Fetal liver</tissue>
    </source>
</reference>
<reference key="5">
    <citation type="submission" date="1993-11" db="UniProtKB">
        <authorList>
            <person name="Hunziker P.E."/>
        </authorList>
    </citation>
    <scope>PROTEIN SEQUENCE</scope>
    <scope>ACETYLATION AT MET-1</scope>
    <source>
        <tissue>Liver</tissue>
    </source>
</reference>
<reference key="6">
    <citation type="journal article" date="2004" name="Genome Res.">
        <title>The status, quality, and expansion of the NIH full-length cDNA project: the Mammalian Gene Collection (MGC).</title>
        <authorList>
            <consortium name="The MGC Project Team"/>
        </authorList>
    </citation>
    <scope>NUCLEOTIDE SEQUENCE [LARGE SCALE MRNA]</scope>
    <source>
        <tissue>Brain</tissue>
    </source>
</reference>
<reference key="7">
    <citation type="journal article" date="2011" name="BMC Syst. Biol.">
        <title>Initial characterization of the human central proteome.</title>
        <authorList>
            <person name="Burkard T.R."/>
            <person name="Planyavsky M."/>
            <person name="Kaupe I."/>
            <person name="Breitwieser F.P."/>
            <person name="Buerckstuemmer T."/>
            <person name="Bennett K.L."/>
            <person name="Superti-Furga G."/>
            <person name="Colinge J."/>
        </authorList>
    </citation>
    <scope>IDENTIFICATION BY MASS SPECTROMETRY [LARGE SCALE ANALYSIS]</scope>
</reference>
<feature type="chain" id="PRO_0000197237" description="Metallothionein-1F">
    <location>
        <begin position="1"/>
        <end position="61"/>
    </location>
</feature>
<feature type="region of interest" description="Beta">
    <location>
        <begin position="1"/>
        <end position="29"/>
    </location>
</feature>
<feature type="region of interest" description="Alpha">
    <location>
        <begin position="30"/>
        <end position="61"/>
    </location>
</feature>
<feature type="binding site" evidence="1">
    <location>
        <position position="5"/>
    </location>
    <ligand>
        <name>a divalent metal cation</name>
        <dbReference type="ChEBI" id="CHEBI:60240"/>
        <label>1</label>
        <note>in cluster B</note>
    </ligand>
</feature>
<feature type="binding site" evidence="1">
    <location>
        <position position="7"/>
    </location>
    <ligand>
        <name>a divalent metal cation</name>
        <dbReference type="ChEBI" id="CHEBI:60240"/>
        <label>1</label>
        <note>in cluster B</note>
    </ligand>
</feature>
<feature type="binding site" evidence="1">
    <location>
        <position position="7"/>
    </location>
    <ligand>
        <name>a divalent metal cation</name>
        <dbReference type="ChEBI" id="CHEBI:60240"/>
        <label>2</label>
        <note>in cluster B</note>
    </ligand>
</feature>
<feature type="binding site" evidence="1">
    <location>
        <position position="13"/>
    </location>
    <ligand>
        <name>a divalent metal cation</name>
        <dbReference type="ChEBI" id="CHEBI:60240"/>
        <label>2</label>
        <note>in cluster B</note>
    </ligand>
</feature>
<feature type="binding site" evidence="1">
    <location>
        <position position="15"/>
    </location>
    <ligand>
        <name>a divalent metal cation</name>
        <dbReference type="ChEBI" id="CHEBI:60240"/>
        <label>2</label>
        <note>in cluster B</note>
    </ligand>
</feature>
<feature type="binding site" evidence="1">
    <location>
        <position position="15"/>
    </location>
    <ligand>
        <name>a divalent metal cation</name>
        <dbReference type="ChEBI" id="CHEBI:60240"/>
        <label>3</label>
        <note>in cluster B</note>
    </ligand>
</feature>
<feature type="binding site" evidence="1">
    <location>
        <position position="19"/>
    </location>
    <ligand>
        <name>a divalent metal cation</name>
        <dbReference type="ChEBI" id="CHEBI:60240"/>
        <label>3</label>
        <note>in cluster B</note>
    </ligand>
</feature>
<feature type="binding site" evidence="1">
    <location>
        <position position="21"/>
    </location>
    <ligand>
        <name>a divalent metal cation</name>
        <dbReference type="ChEBI" id="CHEBI:60240"/>
        <label>1</label>
        <note>in cluster B</note>
    </ligand>
</feature>
<feature type="binding site" evidence="1">
    <location>
        <position position="24"/>
    </location>
    <ligand>
        <name>a divalent metal cation</name>
        <dbReference type="ChEBI" id="CHEBI:60240"/>
        <label>1</label>
        <note>in cluster B</note>
    </ligand>
</feature>
<feature type="binding site" evidence="1">
    <location>
        <position position="24"/>
    </location>
    <ligand>
        <name>a divalent metal cation</name>
        <dbReference type="ChEBI" id="CHEBI:60240"/>
        <label>3</label>
        <note>in cluster B</note>
    </ligand>
</feature>
<feature type="binding site" evidence="1">
    <location>
        <position position="26"/>
    </location>
    <ligand>
        <name>a divalent metal cation</name>
        <dbReference type="ChEBI" id="CHEBI:60240"/>
        <label>2</label>
        <note>in cluster B</note>
    </ligand>
</feature>
<feature type="binding site" evidence="1">
    <location>
        <position position="29"/>
    </location>
    <ligand>
        <name>a divalent metal cation</name>
        <dbReference type="ChEBI" id="CHEBI:60240"/>
        <label>3</label>
        <note>in cluster B</note>
    </ligand>
</feature>
<feature type="binding site" evidence="1">
    <location>
        <position position="33"/>
    </location>
    <ligand>
        <name>a divalent metal cation</name>
        <dbReference type="ChEBI" id="CHEBI:60240"/>
        <label>4</label>
        <note>in cluster A</note>
    </ligand>
</feature>
<feature type="binding site" evidence="1">
    <location>
        <position position="34"/>
    </location>
    <ligand>
        <name>a divalent metal cation</name>
        <dbReference type="ChEBI" id="CHEBI:60240"/>
        <label>4</label>
        <note>in cluster A</note>
    </ligand>
</feature>
<feature type="binding site" evidence="1">
    <location>
        <position position="34"/>
    </location>
    <ligand>
        <name>a divalent metal cation</name>
        <dbReference type="ChEBI" id="CHEBI:60240"/>
        <label>5</label>
        <note>in cluster A</note>
    </ligand>
</feature>
<feature type="binding site" evidence="1">
    <location>
        <position position="36"/>
    </location>
    <ligand>
        <name>a divalent metal cation</name>
        <dbReference type="ChEBI" id="CHEBI:60240"/>
        <label>5</label>
        <note>in cluster A</note>
    </ligand>
</feature>
<feature type="binding site" evidence="1">
    <location>
        <position position="37"/>
    </location>
    <ligand>
        <name>a divalent metal cation</name>
        <dbReference type="ChEBI" id="CHEBI:60240"/>
        <label>5</label>
        <note>in cluster A</note>
    </ligand>
</feature>
<feature type="binding site" evidence="1">
    <location>
        <position position="37"/>
    </location>
    <ligand>
        <name>a divalent metal cation</name>
        <dbReference type="ChEBI" id="CHEBI:60240"/>
        <label>6</label>
        <note>in cluster A</note>
    </ligand>
</feature>
<feature type="binding site" evidence="1">
    <location>
        <position position="41"/>
    </location>
    <ligand>
        <name>a divalent metal cation</name>
        <dbReference type="ChEBI" id="CHEBI:60240"/>
        <label>6</label>
        <note>in cluster A</note>
    </ligand>
</feature>
<feature type="binding site" evidence="1">
    <location>
        <position position="44"/>
    </location>
    <ligand>
        <name>a divalent metal cation</name>
        <dbReference type="ChEBI" id="CHEBI:60240"/>
        <label>4</label>
        <note>in cluster A</note>
    </ligand>
</feature>
<feature type="binding site" evidence="1">
    <location>
        <position position="44"/>
    </location>
    <ligand>
        <name>a divalent metal cation</name>
        <dbReference type="ChEBI" id="CHEBI:60240"/>
        <label>6</label>
        <note>in cluster A</note>
    </ligand>
</feature>
<feature type="binding site" evidence="1">
    <location>
        <position position="48"/>
    </location>
    <ligand>
        <name>a divalent metal cation</name>
        <dbReference type="ChEBI" id="CHEBI:60240"/>
        <label>4</label>
        <note>in cluster A</note>
    </ligand>
</feature>
<feature type="binding site" evidence="1">
    <location>
        <position position="50"/>
    </location>
    <ligand>
        <name>a divalent metal cation</name>
        <dbReference type="ChEBI" id="CHEBI:60240"/>
        <label>5</label>
        <note>in cluster A</note>
    </ligand>
</feature>
<feature type="binding site" evidence="1">
    <location>
        <position position="50"/>
    </location>
    <ligand>
        <name>a divalent metal cation</name>
        <dbReference type="ChEBI" id="CHEBI:60240"/>
        <label>7</label>
        <note>in cluster A</note>
    </ligand>
</feature>
<feature type="binding site" evidence="1">
    <location>
        <position position="57"/>
    </location>
    <ligand>
        <name>a divalent metal cation</name>
        <dbReference type="ChEBI" id="CHEBI:60240"/>
        <label>7</label>
        <note>in cluster A</note>
    </ligand>
</feature>
<feature type="binding site" evidence="1">
    <location>
        <position position="59"/>
    </location>
    <ligand>
        <name>a divalent metal cation</name>
        <dbReference type="ChEBI" id="CHEBI:60240"/>
        <label>7</label>
        <note>in cluster A</note>
    </ligand>
</feature>
<feature type="binding site" evidence="1">
    <location>
        <position position="60"/>
    </location>
    <ligand>
        <name>a divalent metal cation</name>
        <dbReference type="ChEBI" id="CHEBI:60240"/>
        <label>6</label>
        <note>in cluster A</note>
    </ligand>
</feature>
<feature type="binding site" evidence="1">
    <location>
        <position position="60"/>
    </location>
    <ligand>
        <name>a divalent metal cation</name>
        <dbReference type="ChEBI" id="CHEBI:60240"/>
        <label>7</label>
        <note>in cluster A</note>
    </ligand>
</feature>
<feature type="modified residue" description="N-acetylmethionine" evidence="2">
    <location>
        <position position="1"/>
    </location>
</feature>
<feature type="modified residue" description="Phosphoserine" evidence="1">
    <location>
        <position position="58"/>
    </location>
</feature>
<keyword id="KW-0007">Acetylation</keyword>
<keyword id="KW-0104">Cadmium</keyword>
<keyword id="KW-0186">Copper</keyword>
<keyword id="KW-0903">Direct protein sequencing</keyword>
<keyword id="KW-0479">Metal-binding</keyword>
<keyword id="KW-0480">Metal-thiolate cluster</keyword>
<keyword id="KW-0597">Phosphoprotein</keyword>
<keyword id="KW-1267">Proteomics identification</keyword>
<keyword id="KW-1185">Reference proteome</keyword>
<keyword id="KW-0862">Zinc</keyword>
<dbReference type="EMBL" id="M10943">
    <property type="protein sequence ID" value="AAA59588.1"/>
    <property type="molecule type" value="Genomic_DNA"/>
</dbReference>
<dbReference type="EMBL" id="M13003">
    <property type="protein sequence ID" value="AAA36213.1"/>
    <property type="molecule type" value="Genomic_DNA"/>
</dbReference>
<dbReference type="EMBL" id="AF078844">
    <property type="protein sequence ID" value="AAF23355.1"/>
    <property type="status" value="ALT_INIT"/>
    <property type="molecule type" value="mRNA"/>
</dbReference>
<dbReference type="EMBL" id="BC029453">
    <property type="protein sequence ID" value="AAH29453.1"/>
    <property type="molecule type" value="mRNA"/>
</dbReference>
<dbReference type="CCDS" id="CCDS32456.1"/>
<dbReference type="PIR" id="B22634">
    <property type="entry name" value="SMHU1F"/>
</dbReference>
<dbReference type="RefSeq" id="NP_001288201.1">
    <property type="nucleotide sequence ID" value="NM_001301272.1"/>
</dbReference>
<dbReference type="RefSeq" id="NP_005940.1">
    <property type="nucleotide sequence ID" value="NM_005949.4"/>
</dbReference>
<dbReference type="SMR" id="P04733"/>
<dbReference type="BioGRID" id="110600">
    <property type="interactions" value="11"/>
</dbReference>
<dbReference type="FunCoup" id="P04733">
    <property type="interactions" value="37"/>
</dbReference>
<dbReference type="IntAct" id="P04733">
    <property type="interactions" value="11"/>
</dbReference>
<dbReference type="MINT" id="P04733"/>
<dbReference type="STRING" id="9606.ENSP00000334872"/>
<dbReference type="DrugBank" id="DB09130">
    <property type="generic name" value="Copper"/>
</dbReference>
<dbReference type="DrugBank" id="DB12965">
    <property type="generic name" value="Silver"/>
</dbReference>
<dbReference type="iPTMnet" id="P04733"/>
<dbReference type="PhosphoSitePlus" id="P04733"/>
<dbReference type="BioMuta" id="MT1F"/>
<dbReference type="jPOST" id="P04733"/>
<dbReference type="MassIVE" id="P04733"/>
<dbReference type="PaxDb" id="9606-ENSP00000334872"/>
<dbReference type="PeptideAtlas" id="P04733"/>
<dbReference type="ProteomicsDB" id="51740"/>
<dbReference type="Pumba" id="P04733"/>
<dbReference type="Antibodypedia" id="76634">
    <property type="antibodies" value="41 antibodies from 7 providers"/>
</dbReference>
<dbReference type="DNASU" id="4494"/>
<dbReference type="Ensembl" id="ENST00000334350.7">
    <property type="protein sequence ID" value="ENSP00000334872.6"/>
    <property type="gene ID" value="ENSG00000198417.7"/>
</dbReference>
<dbReference type="GeneID" id="4494"/>
<dbReference type="KEGG" id="hsa:4494"/>
<dbReference type="MANE-Select" id="ENST00000334350.7">
    <property type="protein sequence ID" value="ENSP00000334872.6"/>
    <property type="RefSeq nucleotide sequence ID" value="NM_005949.4"/>
    <property type="RefSeq protein sequence ID" value="NP_005940.1"/>
</dbReference>
<dbReference type="UCSC" id="uc002ejt.4">
    <property type="organism name" value="human"/>
</dbReference>
<dbReference type="AGR" id="HGNC:7398"/>
<dbReference type="CTD" id="4494"/>
<dbReference type="DisGeNET" id="4494"/>
<dbReference type="GeneCards" id="MT1F"/>
<dbReference type="HGNC" id="HGNC:7398">
    <property type="gene designation" value="MT1F"/>
</dbReference>
<dbReference type="HPA" id="ENSG00000198417">
    <property type="expression patterns" value="Tissue enhanced (kidney, liver, thyroid gland)"/>
</dbReference>
<dbReference type="MIM" id="156352">
    <property type="type" value="gene"/>
</dbReference>
<dbReference type="neXtProt" id="NX_P04733"/>
<dbReference type="OpenTargets" id="ENSG00000198417"/>
<dbReference type="PharmGKB" id="PA31203"/>
<dbReference type="VEuPathDB" id="HostDB:ENSG00000198417"/>
<dbReference type="eggNOG" id="KOG4738">
    <property type="taxonomic scope" value="Eukaryota"/>
</dbReference>
<dbReference type="GeneTree" id="ENSGT00950000182967"/>
<dbReference type="HOGENOM" id="CLU_171204_2_0_1"/>
<dbReference type="InParanoid" id="P04733"/>
<dbReference type="OMA" id="GCESACK"/>
<dbReference type="PAN-GO" id="P04733">
    <property type="GO annotations" value="8 GO annotations based on evolutionary models"/>
</dbReference>
<dbReference type="PhylomeDB" id="P04733"/>
<dbReference type="TreeFam" id="TF336054"/>
<dbReference type="PathwayCommons" id="P04733"/>
<dbReference type="Reactome" id="R-HSA-5661231">
    <property type="pathway name" value="Metallothioneins bind metals"/>
</dbReference>
<dbReference type="SignaLink" id="P04733"/>
<dbReference type="BioGRID-ORCS" id="4494">
    <property type="hits" value="20 hits in 1076 CRISPR screens"/>
</dbReference>
<dbReference type="ChiTaRS" id="MT1F">
    <property type="organism name" value="human"/>
</dbReference>
<dbReference type="GeneWiki" id="MT1F"/>
<dbReference type="GenomeRNAi" id="4494"/>
<dbReference type="Pharos" id="P04733">
    <property type="development level" value="Tbio"/>
</dbReference>
<dbReference type="PRO" id="PR:P04733"/>
<dbReference type="Proteomes" id="UP000005640">
    <property type="component" value="Chromosome 16"/>
</dbReference>
<dbReference type="RNAct" id="P04733">
    <property type="molecule type" value="protein"/>
</dbReference>
<dbReference type="Bgee" id="ENSG00000198417">
    <property type="expression patterns" value="Expressed in nephron tubule and 203 other cell types or tissues"/>
</dbReference>
<dbReference type="ExpressionAtlas" id="P04733">
    <property type="expression patterns" value="baseline and differential"/>
</dbReference>
<dbReference type="GO" id="GO:0005737">
    <property type="term" value="C:cytoplasm"/>
    <property type="evidence" value="ECO:0000314"/>
    <property type="project" value="UniProtKB"/>
</dbReference>
<dbReference type="GO" id="GO:0005634">
    <property type="term" value="C:nucleus"/>
    <property type="evidence" value="ECO:0000314"/>
    <property type="project" value="UniProtKB"/>
</dbReference>
<dbReference type="GO" id="GO:0046872">
    <property type="term" value="F:metal ion binding"/>
    <property type="evidence" value="ECO:0000318"/>
    <property type="project" value="GO_Central"/>
</dbReference>
<dbReference type="GO" id="GO:0008270">
    <property type="term" value="F:zinc ion binding"/>
    <property type="evidence" value="ECO:0000250"/>
    <property type="project" value="UniProtKB"/>
</dbReference>
<dbReference type="GO" id="GO:0071276">
    <property type="term" value="P:cellular response to cadmium ion"/>
    <property type="evidence" value="ECO:0000270"/>
    <property type="project" value="UniProtKB"/>
</dbReference>
<dbReference type="GO" id="GO:0071280">
    <property type="term" value="P:cellular response to copper ion"/>
    <property type="evidence" value="ECO:0000318"/>
    <property type="project" value="GO_Central"/>
</dbReference>
<dbReference type="GO" id="GO:0071294">
    <property type="term" value="P:cellular response to zinc ion"/>
    <property type="evidence" value="ECO:0000250"/>
    <property type="project" value="UniProtKB"/>
</dbReference>
<dbReference type="GO" id="GO:0010273">
    <property type="term" value="P:detoxification of copper ion"/>
    <property type="evidence" value="ECO:0000318"/>
    <property type="project" value="GO_Central"/>
</dbReference>
<dbReference type="GO" id="GO:0006882">
    <property type="term" value="P:intracellular zinc ion homeostasis"/>
    <property type="evidence" value="ECO:0000318"/>
    <property type="project" value="GO_Central"/>
</dbReference>
<dbReference type="GO" id="GO:0045926">
    <property type="term" value="P:negative regulation of growth"/>
    <property type="evidence" value="ECO:0000250"/>
    <property type="project" value="UniProtKB"/>
</dbReference>
<dbReference type="FunFam" id="4.10.10.10:FF:000001">
    <property type="entry name" value="Metallothionein"/>
    <property type="match status" value="1"/>
</dbReference>
<dbReference type="Gene3D" id="4.10.10.10">
    <property type="entry name" value="Metallothionein Isoform II"/>
    <property type="match status" value="1"/>
</dbReference>
<dbReference type="InterPro" id="IPR017854">
    <property type="entry name" value="Metalthion_dom_sf"/>
</dbReference>
<dbReference type="InterPro" id="IPR023587">
    <property type="entry name" value="Metalthion_dom_sf_vert"/>
</dbReference>
<dbReference type="InterPro" id="IPR000006">
    <property type="entry name" value="Metalthion_vert"/>
</dbReference>
<dbReference type="InterPro" id="IPR018064">
    <property type="entry name" value="Metalthion_vert_metal_BS"/>
</dbReference>
<dbReference type="PANTHER" id="PTHR23299">
    <property type="entry name" value="METALLOTHIONEIN"/>
    <property type="match status" value="1"/>
</dbReference>
<dbReference type="PANTHER" id="PTHR23299:SF55">
    <property type="entry name" value="METALLOTHIONEIN-1F"/>
    <property type="match status" value="1"/>
</dbReference>
<dbReference type="Pfam" id="PF00131">
    <property type="entry name" value="Metallothio"/>
    <property type="match status" value="1"/>
</dbReference>
<dbReference type="PRINTS" id="PR00860">
    <property type="entry name" value="MTVERTEBRATE"/>
</dbReference>
<dbReference type="SUPFAM" id="SSF57868">
    <property type="entry name" value="Metallothionein"/>
    <property type="match status" value="1"/>
</dbReference>
<dbReference type="PROSITE" id="PS00203">
    <property type="entry name" value="METALLOTHIONEIN_VRT"/>
    <property type="match status" value="1"/>
</dbReference>